<accession>Q8E7H6</accession>
<gene>
    <name type="primary">ssb2</name>
    <name type="ordered locus">gbs0178</name>
</gene>
<proteinExistence type="inferred from homology"/>
<sequence length="131" mass="14791">MYNKVIMIGRLTAKPEMVKTPTDKSVTRATVAVNRRFKGSNGEREADFINVVMWGRLAETLASYGTKGSLISVDGELRTRKYEKDGQTHYITEVLASSFQLLESRSQRAMRENNISGDLSDLVLEEEELPF</sequence>
<name>SSB2_STRA3</name>
<organism>
    <name type="scientific">Streptococcus agalactiae serotype III (strain NEM316)</name>
    <dbReference type="NCBI Taxonomy" id="211110"/>
    <lineage>
        <taxon>Bacteria</taxon>
        <taxon>Bacillati</taxon>
        <taxon>Bacillota</taxon>
        <taxon>Bacilli</taxon>
        <taxon>Lactobacillales</taxon>
        <taxon>Streptococcaceae</taxon>
        <taxon>Streptococcus</taxon>
    </lineage>
</organism>
<reference key="1">
    <citation type="journal article" date="2002" name="Mol. Microbiol.">
        <title>Genome sequence of Streptococcus agalactiae, a pathogen causing invasive neonatal disease.</title>
        <authorList>
            <person name="Glaser P."/>
            <person name="Rusniok C."/>
            <person name="Buchrieser C."/>
            <person name="Chevalier F."/>
            <person name="Frangeul L."/>
            <person name="Msadek T."/>
            <person name="Zouine M."/>
            <person name="Couve E."/>
            <person name="Lalioui L."/>
            <person name="Poyart C."/>
            <person name="Trieu-Cuot P."/>
            <person name="Kunst F."/>
        </authorList>
    </citation>
    <scope>NUCLEOTIDE SEQUENCE [LARGE SCALE GENOMIC DNA]</scope>
    <source>
        <strain>NEM316</strain>
    </source>
</reference>
<feature type="chain" id="PRO_0000096109" description="Single-stranded DNA-binding protein 2">
    <location>
        <begin position="1"/>
        <end position="131"/>
    </location>
</feature>
<feature type="domain" description="SSB" evidence="1">
    <location>
        <begin position="1"/>
        <end position="103"/>
    </location>
</feature>
<feature type="short sequence motif" description="Important for interaction with partner proteins" evidence="1">
    <location>
        <begin position="126"/>
        <end position="131"/>
    </location>
</feature>
<dbReference type="EMBL" id="AL766844">
    <property type="protein sequence ID" value="CAD45823.1"/>
    <property type="molecule type" value="Genomic_DNA"/>
</dbReference>
<dbReference type="RefSeq" id="WP_000282450.1">
    <property type="nucleotide sequence ID" value="NC_004368.1"/>
</dbReference>
<dbReference type="SMR" id="Q8E7H6"/>
<dbReference type="KEGG" id="san:gbs0178"/>
<dbReference type="eggNOG" id="COG0629">
    <property type="taxonomic scope" value="Bacteria"/>
</dbReference>
<dbReference type="HOGENOM" id="CLU_078758_6_1_9"/>
<dbReference type="Proteomes" id="UP000000823">
    <property type="component" value="Chromosome"/>
</dbReference>
<dbReference type="GO" id="GO:0009295">
    <property type="term" value="C:nucleoid"/>
    <property type="evidence" value="ECO:0007669"/>
    <property type="project" value="TreeGrafter"/>
</dbReference>
<dbReference type="GO" id="GO:0003697">
    <property type="term" value="F:single-stranded DNA binding"/>
    <property type="evidence" value="ECO:0007669"/>
    <property type="project" value="UniProtKB-UniRule"/>
</dbReference>
<dbReference type="GO" id="GO:0006310">
    <property type="term" value="P:DNA recombination"/>
    <property type="evidence" value="ECO:0007669"/>
    <property type="project" value="UniProtKB-UniRule"/>
</dbReference>
<dbReference type="GO" id="GO:0006281">
    <property type="term" value="P:DNA repair"/>
    <property type="evidence" value="ECO:0007669"/>
    <property type="project" value="UniProtKB-UniRule"/>
</dbReference>
<dbReference type="GO" id="GO:0006260">
    <property type="term" value="P:DNA replication"/>
    <property type="evidence" value="ECO:0007669"/>
    <property type="project" value="UniProtKB-UniRule"/>
</dbReference>
<dbReference type="CDD" id="cd04496">
    <property type="entry name" value="SSB_OBF"/>
    <property type="match status" value="1"/>
</dbReference>
<dbReference type="Gene3D" id="2.40.50.140">
    <property type="entry name" value="Nucleic acid-binding proteins"/>
    <property type="match status" value="1"/>
</dbReference>
<dbReference type="HAMAP" id="MF_00984">
    <property type="entry name" value="SSB"/>
    <property type="match status" value="1"/>
</dbReference>
<dbReference type="InterPro" id="IPR012340">
    <property type="entry name" value="NA-bd_OB-fold"/>
</dbReference>
<dbReference type="InterPro" id="IPR000424">
    <property type="entry name" value="Primosome_PriB/ssb"/>
</dbReference>
<dbReference type="InterPro" id="IPR011344">
    <property type="entry name" value="ssDNA-bd"/>
</dbReference>
<dbReference type="NCBIfam" id="NF005579">
    <property type="entry name" value="PRK07274.1"/>
    <property type="match status" value="1"/>
</dbReference>
<dbReference type="NCBIfam" id="TIGR00621">
    <property type="entry name" value="ssb"/>
    <property type="match status" value="1"/>
</dbReference>
<dbReference type="PANTHER" id="PTHR10302">
    <property type="entry name" value="SINGLE-STRANDED DNA-BINDING PROTEIN"/>
    <property type="match status" value="1"/>
</dbReference>
<dbReference type="PANTHER" id="PTHR10302:SF27">
    <property type="entry name" value="SINGLE-STRANDED DNA-BINDING PROTEIN"/>
    <property type="match status" value="1"/>
</dbReference>
<dbReference type="Pfam" id="PF00436">
    <property type="entry name" value="SSB"/>
    <property type="match status" value="1"/>
</dbReference>
<dbReference type="PIRSF" id="PIRSF002070">
    <property type="entry name" value="SSB"/>
    <property type="match status" value="1"/>
</dbReference>
<dbReference type="SUPFAM" id="SSF50249">
    <property type="entry name" value="Nucleic acid-binding proteins"/>
    <property type="match status" value="1"/>
</dbReference>
<dbReference type="PROSITE" id="PS50935">
    <property type="entry name" value="SSB"/>
    <property type="match status" value="1"/>
</dbReference>
<keyword id="KW-0227">DNA damage</keyword>
<keyword id="KW-0233">DNA recombination</keyword>
<keyword id="KW-0234">DNA repair</keyword>
<keyword id="KW-0235">DNA replication</keyword>
<keyword id="KW-0238">DNA-binding</keyword>
<protein>
    <recommendedName>
        <fullName evidence="1">Single-stranded DNA-binding protein 2</fullName>
        <shortName evidence="1">SSB 2</shortName>
    </recommendedName>
</protein>
<comment type="function">
    <text evidence="1">Plays an important role in DNA replication, recombination and repair. Binds to ssDNA and to an array of partner proteins to recruit them to their sites of action during DNA metabolism.</text>
</comment>
<comment type="subunit">
    <text evidence="1">Homotetramer.</text>
</comment>
<evidence type="ECO:0000255" key="1">
    <source>
        <dbReference type="HAMAP-Rule" id="MF_00984"/>
    </source>
</evidence>